<dbReference type="EC" id="2.3.1.-" evidence="2 3"/>
<dbReference type="EMBL" id="AF244356">
    <property type="protein sequence ID" value="AAF70462.1"/>
    <property type="molecule type" value="mRNA"/>
</dbReference>
<dbReference type="EMBL" id="BX284604">
    <property type="protein sequence ID" value="CAA92958.1"/>
    <property type="molecule type" value="Genomic_DNA"/>
</dbReference>
<dbReference type="EMBL" id="BX284604">
    <property type="protein sequence ID" value="CCO25597.1"/>
    <property type="molecule type" value="Genomic_DNA"/>
</dbReference>
<dbReference type="PIR" id="T22789">
    <property type="entry name" value="T22789"/>
</dbReference>
<dbReference type="RefSeq" id="NP_001263767.1">
    <molecule id="G5EEE5-2"/>
    <property type="nucleotide sequence ID" value="NM_001276838.3"/>
</dbReference>
<dbReference type="RefSeq" id="NP_501689.1">
    <molecule id="G5EEE5-1"/>
    <property type="nucleotide sequence ID" value="NM_069288.9"/>
</dbReference>
<dbReference type="SMR" id="G5EEE5"/>
<dbReference type="FunCoup" id="G5EEE5">
    <property type="interactions" value="201"/>
</dbReference>
<dbReference type="STRING" id="6239.F56H11.4a.1"/>
<dbReference type="SwissLipids" id="SLP:000000572"/>
<dbReference type="PaxDb" id="6239-F56H11.4a"/>
<dbReference type="PeptideAtlas" id="G5EEE5"/>
<dbReference type="EnsemblMetazoa" id="F56H11.4a.1">
    <molecule id="G5EEE5-1"/>
    <property type="protein sequence ID" value="F56H11.4a.1"/>
    <property type="gene ID" value="WBGene00001239"/>
</dbReference>
<dbReference type="EnsemblMetazoa" id="F56H11.4b.1">
    <molecule id="G5EEE5-2"/>
    <property type="protein sequence ID" value="F56H11.4b.1"/>
    <property type="gene ID" value="WBGene00001239"/>
</dbReference>
<dbReference type="GeneID" id="177787"/>
<dbReference type="KEGG" id="cel:CELE_F56H11.4"/>
<dbReference type="AGR" id="WB:WBGene00001239"/>
<dbReference type="CTD" id="177787"/>
<dbReference type="WormBase" id="F56H11.4a">
    <molecule id="G5EEE5-1"/>
    <property type="protein sequence ID" value="CE05979"/>
    <property type="gene ID" value="WBGene00001239"/>
    <property type="gene designation" value="elo-1"/>
</dbReference>
<dbReference type="WormBase" id="F56H11.4b">
    <molecule id="G5EEE5-2"/>
    <property type="protein sequence ID" value="CE47981"/>
    <property type="gene ID" value="WBGene00001239"/>
    <property type="gene designation" value="elo-1"/>
</dbReference>
<dbReference type="eggNOG" id="KOG3072">
    <property type="taxonomic scope" value="Eukaryota"/>
</dbReference>
<dbReference type="GeneTree" id="ENSGT01050000244965"/>
<dbReference type="HOGENOM" id="CLU_048483_1_0_1"/>
<dbReference type="InParanoid" id="G5EEE5"/>
<dbReference type="OMA" id="THGGKNF"/>
<dbReference type="OrthoDB" id="10259681at2759"/>
<dbReference type="PhylomeDB" id="G5EEE5"/>
<dbReference type="Reactome" id="R-CEL-2046105">
    <property type="pathway name" value="Linoleic acid (LA) metabolism"/>
</dbReference>
<dbReference type="Reactome" id="R-CEL-2046106">
    <property type="pathway name" value="alpha-linolenic acid (ALA) metabolism"/>
</dbReference>
<dbReference type="Reactome" id="R-CEL-75876">
    <property type="pathway name" value="Synthesis of very long-chain fatty acyl-CoAs"/>
</dbReference>
<dbReference type="UniPathway" id="UPA00094"/>
<dbReference type="PRO" id="PR:G5EEE5"/>
<dbReference type="Proteomes" id="UP000001940">
    <property type="component" value="Chromosome IV"/>
</dbReference>
<dbReference type="Bgee" id="WBGene00001239">
    <property type="expression patterns" value="Expressed in larva and 4 other cell types or tissues"/>
</dbReference>
<dbReference type="ExpressionAtlas" id="G5EEE5">
    <property type="expression patterns" value="baseline and differential"/>
</dbReference>
<dbReference type="GO" id="GO:0005789">
    <property type="term" value="C:endoplasmic reticulum membrane"/>
    <property type="evidence" value="ECO:0000318"/>
    <property type="project" value="GO_Central"/>
</dbReference>
<dbReference type="GO" id="GO:0009922">
    <property type="term" value="F:fatty acid elongase activity"/>
    <property type="evidence" value="ECO:0000318"/>
    <property type="project" value="GO_Central"/>
</dbReference>
<dbReference type="GO" id="GO:0034625">
    <property type="term" value="P:fatty acid elongation, monounsaturated fatty acid"/>
    <property type="evidence" value="ECO:0000318"/>
    <property type="project" value="GO_Central"/>
</dbReference>
<dbReference type="GO" id="GO:0034626">
    <property type="term" value="P:fatty acid elongation, polyunsaturated fatty acid"/>
    <property type="evidence" value="ECO:0000318"/>
    <property type="project" value="GO_Central"/>
</dbReference>
<dbReference type="GO" id="GO:0019367">
    <property type="term" value="P:fatty acid elongation, saturated fatty acid"/>
    <property type="evidence" value="ECO:0000318"/>
    <property type="project" value="GO_Central"/>
</dbReference>
<dbReference type="GO" id="GO:0030148">
    <property type="term" value="P:sphingolipid biosynthetic process"/>
    <property type="evidence" value="ECO:0000318"/>
    <property type="project" value="GO_Central"/>
</dbReference>
<dbReference type="GO" id="GO:0006636">
    <property type="term" value="P:unsaturated fatty acid biosynthetic process"/>
    <property type="evidence" value="ECO:0000315"/>
    <property type="project" value="WormBase"/>
</dbReference>
<dbReference type="GO" id="GO:0042761">
    <property type="term" value="P:very long-chain fatty acid biosynthetic process"/>
    <property type="evidence" value="ECO:0000318"/>
    <property type="project" value="GO_Central"/>
</dbReference>
<dbReference type="InterPro" id="IPR030457">
    <property type="entry name" value="ELO_CS"/>
</dbReference>
<dbReference type="InterPro" id="IPR002076">
    <property type="entry name" value="ELO_fam"/>
</dbReference>
<dbReference type="PANTHER" id="PTHR11157:SF26">
    <property type="entry name" value="ELONGATION OF LONG CHAIN FATTY ACIDS PROTEIN 1"/>
    <property type="match status" value="1"/>
</dbReference>
<dbReference type="PANTHER" id="PTHR11157">
    <property type="entry name" value="FATTY ACID ACYL TRANSFERASE-RELATED"/>
    <property type="match status" value="1"/>
</dbReference>
<dbReference type="Pfam" id="PF01151">
    <property type="entry name" value="ELO"/>
    <property type="match status" value="1"/>
</dbReference>
<dbReference type="PROSITE" id="PS01188">
    <property type="entry name" value="ELO"/>
    <property type="match status" value="1"/>
</dbReference>
<gene>
    <name evidence="6 7" type="primary">elo-1</name>
    <name evidence="7" type="ORF">F56H11.4</name>
</gene>
<comment type="function">
    <text evidence="2 3 4">Catalyzes the first and rate-limiting reaction of the four reactions that constitute the long-chain fatty acids elongation cycle. Uses malonyl-CoA to add 2 carbons per cycle to the chain of long-chain fatty acids. Condensing enzyme that catalyzes the elongation of monounsaturated (MUFA) and polyunsaturated (PUFA) fatty acids that are involved in multiple biological processes as precursors of membrane lipids and lipid mediators.</text>
</comment>
<comment type="catalytic activity">
    <reaction evidence="2 3">
        <text>(6Z,9Z,12Z)-octadecatrienoyl-CoA + malonyl-CoA + H(+) = (8Z,11Z,14Z)-3-oxoeicosatrienoyl-CoA + CO2 + CoA</text>
        <dbReference type="Rhea" id="RHEA:35379"/>
        <dbReference type="ChEBI" id="CHEBI:15378"/>
        <dbReference type="ChEBI" id="CHEBI:16526"/>
        <dbReference type="ChEBI" id="CHEBI:57287"/>
        <dbReference type="ChEBI" id="CHEBI:57363"/>
        <dbReference type="ChEBI" id="CHEBI:57384"/>
        <dbReference type="ChEBI" id="CHEBI:71481"/>
    </reaction>
    <physiologicalReaction direction="left-to-right" evidence="2 3">
        <dbReference type="Rhea" id="RHEA:35380"/>
    </physiologicalReaction>
</comment>
<comment type="catalytic activity">
    <reaction evidence="2 3">
        <text>(6Z,9Z,12Z,15Z)-octadecatetraenoyl-CoA + malonyl-CoA + H(+) = (8Z,11Z,14Z,17Z)-3-oxoicosatetraenoyl-CoA + CO2 + CoA</text>
        <dbReference type="Rhea" id="RHEA:35391"/>
        <dbReference type="ChEBI" id="CHEBI:15378"/>
        <dbReference type="ChEBI" id="CHEBI:16526"/>
        <dbReference type="ChEBI" id="CHEBI:57287"/>
        <dbReference type="ChEBI" id="CHEBI:57384"/>
        <dbReference type="ChEBI" id="CHEBI:71489"/>
        <dbReference type="ChEBI" id="CHEBI:71491"/>
    </reaction>
    <physiologicalReaction direction="left-to-right" evidence="2 3">
        <dbReference type="Rhea" id="RHEA:35392"/>
    </physiologicalReaction>
</comment>
<comment type="catalytic activity">
    <reaction evidence="2">
        <text>(9Z)-hexadecenoyl-CoA + malonyl-CoA + H(+) = 3-oxo-(11Z)-octadecenoyl-CoA + CO2 + CoA</text>
        <dbReference type="Rhea" id="RHEA:39675"/>
        <dbReference type="ChEBI" id="CHEBI:15378"/>
        <dbReference type="ChEBI" id="CHEBI:16526"/>
        <dbReference type="ChEBI" id="CHEBI:57287"/>
        <dbReference type="ChEBI" id="CHEBI:57384"/>
        <dbReference type="ChEBI" id="CHEBI:61540"/>
        <dbReference type="ChEBI" id="CHEBI:76555"/>
    </reaction>
    <physiologicalReaction direction="left-to-right" evidence="2">
        <dbReference type="Rhea" id="RHEA:39676"/>
    </physiologicalReaction>
</comment>
<comment type="pathway">
    <text evidence="2 3">Lipid metabolism; fatty acid biosynthesis.</text>
</comment>
<comment type="subcellular location">
    <subcellularLocation>
        <location evidence="1">Membrane</location>
        <topology evidence="1">Multi-pass membrane protein</topology>
    </subcellularLocation>
</comment>
<comment type="alternative products">
    <event type="alternative initiation"/>
    <isoform>
        <id>G5EEE5-1</id>
        <name>a</name>
        <sequence type="displayed"/>
    </isoform>
    <isoform>
        <id>G5EEE5-2</id>
        <name>b</name>
        <sequence type="described" ref="VSP_061024"/>
    </isoform>
</comment>
<comment type="similarity">
    <text evidence="5">Belongs to the ELO family.</text>
</comment>
<proteinExistence type="evidence at protein level"/>
<accession>G5EEE5</accession>
<accession>K8ES54</accession>
<evidence type="ECO:0000255" key="1"/>
<evidence type="ECO:0000269" key="2">
    <source>
    </source>
</evidence>
<evidence type="ECO:0000269" key="3">
    <source>
    </source>
</evidence>
<evidence type="ECO:0000269" key="4">
    <source>
    </source>
</evidence>
<evidence type="ECO:0000305" key="5"/>
<evidence type="ECO:0000312" key="6">
    <source>
        <dbReference type="EMBL" id="CAA92958.1"/>
    </source>
</evidence>
<evidence type="ECO:0000312" key="7">
    <source>
        <dbReference type="WormBase" id="F56H11.4a"/>
    </source>
</evidence>
<protein>
    <recommendedName>
        <fullName evidence="5">Long chain fatty acid elongase 1</fullName>
        <shortName>ELO-1</shortName>
        <ecNumber evidence="2 3">2.3.1.-</ecNumber>
    </recommendedName>
    <alternativeName>
        <fullName>Elongation of long chain fatty acids protein 1</fullName>
    </alternativeName>
    <alternativeName>
        <fullName>Long-chain 3-oxoacyl-CoA synthase 1</fullName>
        <shortName>CEELO1</shortName>
    </alternativeName>
</protein>
<sequence>MAQHPLVQRLLDVKFDTKRFVAIATHGPKNFPDAEGRKFFADHFDVTIQASILYMVVVFGTKWFMRNRQPFQLTIPLNIWNFILAAFSIAGAVKMTPEFFGTIANKGIVASYCKVFDFTKGENGYWVWLFMASKLFELVDTIFLVLRKRPLMFLHWYHHILTMIYAWYSHPLTPGFNRYGIYLNFVVHAFMYSYYFLRSMKIRVPGFIAQAITSLQIVQFIISCAVLAHLGYLMHFTNANCDFEPSVFKLAVFMDTTYLALFVNFFLQSYVLRGGKDKYKAVPKKKNN</sequence>
<name>ELO1_CAEEL</name>
<organism>
    <name type="scientific">Caenorhabditis elegans</name>
    <dbReference type="NCBI Taxonomy" id="6239"/>
    <lineage>
        <taxon>Eukaryota</taxon>
        <taxon>Metazoa</taxon>
        <taxon>Ecdysozoa</taxon>
        <taxon>Nematoda</taxon>
        <taxon>Chromadorea</taxon>
        <taxon>Rhabditida</taxon>
        <taxon>Rhabditina</taxon>
        <taxon>Rhabditomorpha</taxon>
        <taxon>Rhabditoidea</taxon>
        <taxon>Rhabditidae</taxon>
        <taxon>Peloderinae</taxon>
        <taxon>Caenorhabditis</taxon>
    </lineage>
</organism>
<reference key="1">
    <citation type="submission" date="2000-03" db="EMBL/GenBank/DDBJ databases">
        <title>Identification and characterization of novel polyunsaturated fatty acid elongating enzymes from Mortierella alpina and Caenorhabditis elegans.</title>
        <authorList>
            <person name="Das T."/>
            <person name="Parker-Barnes J.M."/>
            <person name="Thurmond J.M."/>
            <person name="Bobik E."/>
            <person name="Leonard A.E."/>
            <person name="Chuang L."/>
            <person name="Huang Y.-S."/>
            <person name="Mukerji P."/>
        </authorList>
    </citation>
    <scope>NUCLEOTIDE SEQUENCE [MRNA] (ISOFORM A)</scope>
</reference>
<reference key="2">
    <citation type="journal article" date="1998" name="Science">
        <title>Genome sequence of the nematode C. elegans: a platform for investigating biology.</title>
        <authorList>
            <consortium name="The C. elegans sequencing consortium"/>
        </authorList>
    </citation>
    <scope>NUCLEOTIDE SEQUENCE [LARGE SCALE GENOMIC DNA]</scope>
    <source>
        <strain>Bristol N2</strain>
    </source>
</reference>
<reference key="3">
    <citation type="journal article" date="2000" name="Proc. Natl. Acad. Sci. U.S.A.">
        <title>Heterologous reconstitution in yeast of the polyunsaturated fatty acid biosynthetic pathway.</title>
        <authorList>
            <person name="Beaudoin F."/>
            <person name="Michaelson L.V."/>
            <person name="Hey S.J."/>
            <person name="Lewis M.J."/>
            <person name="Shewry P.R."/>
            <person name="Sayanova O."/>
            <person name="Napier J.A."/>
        </authorList>
    </citation>
    <scope>FUNCTION</scope>
    <scope>CATALYTIC ACTIVITY</scope>
    <scope>PATHWAY</scope>
</reference>
<reference key="4">
    <citation type="journal article" date="2002" name="Proc. Natl. Acad. Sci. U.S.A.">
        <title>Genetic dissection of polyunsaturated fatty acid synthesis in Caenorhabditis elegans.</title>
        <authorList>
            <person name="Watts J.L."/>
            <person name="Browse J."/>
        </authorList>
    </citation>
    <scope>FUNCTION</scope>
    <scope>CATALYTIC ACTIVITY</scope>
    <scope>PATHWAY</scope>
</reference>
<reference key="5">
    <citation type="journal article" date="2020" name="Cells">
        <title>Juniperonic Acid Biosynthesis is Essential in Caenorhabditis Elegans Lacking Delta6 Desaturase (fat-3) and Generates New omega-3 Endocannabinoids.</title>
        <authorList>
            <person name="Guha S."/>
            <person name="Calarco S."/>
            <person name="Gachet M.S."/>
            <person name="Gertsch J."/>
        </authorList>
    </citation>
    <scope>FUNCTION</scope>
</reference>
<keyword id="KW-0024">Alternative initiation</keyword>
<keyword id="KW-0275">Fatty acid biosynthesis</keyword>
<keyword id="KW-0276">Fatty acid metabolism</keyword>
<keyword id="KW-0444">Lipid biosynthesis</keyword>
<keyword id="KW-0443">Lipid metabolism</keyword>
<keyword id="KW-0472">Membrane</keyword>
<keyword id="KW-1185">Reference proteome</keyword>
<keyword id="KW-0808">Transferase</keyword>
<keyword id="KW-0812">Transmembrane</keyword>
<keyword id="KW-1133">Transmembrane helix</keyword>
<feature type="chain" id="PRO_0000452610" description="Long chain fatty acid elongase 1">
    <location>
        <begin position="1"/>
        <end position="288"/>
    </location>
</feature>
<feature type="transmembrane region" description="Helical" evidence="1">
    <location>
        <begin position="39"/>
        <end position="59"/>
    </location>
</feature>
<feature type="transmembrane region" description="Helical" evidence="1">
    <location>
        <begin position="73"/>
        <end position="93"/>
    </location>
</feature>
<feature type="transmembrane region" description="Helical" evidence="1">
    <location>
        <begin position="126"/>
        <end position="146"/>
    </location>
</feature>
<feature type="transmembrane region" description="Helical" evidence="1">
    <location>
        <begin position="150"/>
        <end position="170"/>
    </location>
</feature>
<feature type="transmembrane region" description="Helical" evidence="1">
    <location>
        <begin position="180"/>
        <end position="197"/>
    </location>
</feature>
<feature type="transmembrane region" description="Helical" evidence="1">
    <location>
        <begin position="217"/>
        <end position="237"/>
    </location>
</feature>
<feature type="transmembrane region" description="Helical" evidence="1">
    <location>
        <begin position="247"/>
        <end position="267"/>
    </location>
</feature>
<feature type="splice variant" id="VSP_061024" description="In isoform b.">
    <location>
        <begin position="1"/>
        <end position="54"/>
    </location>
</feature>